<protein>
    <recommendedName>
        <fullName evidence="3">Propane 2-monooxygenase, effector component</fullName>
    </recommendedName>
    <alternativeName>
        <fullName evidence="3">Propane 2-monooxygenase, coupling protein component</fullName>
    </alternativeName>
</protein>
<proteinExistence type="evidence at protein level"/>
<gene>
    <name evidence="3" type="primary">mimD</name>
    <name evidence="6" type="ordered locus">MSMEG_1974</name>
    <name evidence="7" type="ordered locus">MSMEI_1930</name>
</gene>
<dbReference type="EMBL" id="CP000480">
    <property type="protein sequence ID" value="ABK73591.1"/>
    <property type="molecule type" value="Genomic_DNA"/>
</dbReference>
<dbReference type="EMBL" id="CP001663">
    <property type="protein sequence ID" value="AFP38401.1"/>
    <property type="status" value="ALT_INIT"/>
    <property type="molecule type" value="Genomic_DNA"/>
</dbReference>
<dbReference type="RefSeq" id="WP_003893349.1">
    <property type="nucleotide sequence ID" value="NZ_SIJM01000020.1"/>
</dbReference>
<dbReference type="RefSeq" id="YP_886338.1">
    <property type="nucleotide sequence ID" value="NC_008596.1"/>
</dbReference>
<dbReference type="SMR" id="A0QTV0"/>
<dbReference type="STRING" id="246196.MSMEG_1974"/>
<dbReference type="PaxDb" id="246196-MSMEI_1930"/>
<dbReference type="KEGG" id="msb:LJ00_09850"/>
<dbReference type="KEGG" id="msg:MSMEI_1930"/>
<dbReference type="KEGG" id="msm:MSMEG_1974"/>
<dbReference type="PATRIC" id="fig|246196.19.peg.1951"/>
<dbReference type="eggNOG" id="ENOG5032SNE">
    <property type="taxonomic scope" value="Bacteria"/>
</dbReference>
<dbReference type="OrthoDB" id="2990211at2"/>
<dbReference type="Proteomes" id="UP000000757">
    <property type="component" value="Chromosome"/>
</dbReference>
<dbReference type="Proteomes" id="UP000006158">
    <property type="component" value="Chromosome"/>
</dbReference>
<dbReference type="GO" id="GO:0004497">
    <property type="term" value="F:monooxygenase activity"/>
    <property type="evidence" value="ECO:0007669"/>
    <property type="project" value="InterPro"/>
</dbReference>
<dbReference type="Gene3D" id="3.90.56.10">
    <property type="entry name" value="Monooxygenase component MmoB/DmpM"/>
    <property type="match status" value="1"/>
</dbReference>
<dbReference type="InterPro" id="IPR003454">
    <property type="entry name" value="MOase_MmoB_DmpM"/>
</dbReference>
<dbReference type="InterPro" id="IPR036889">
    <property type="entry name" value="mOase_MmoB_DmpM_sf"/>
</dbReference>
<dbReference type="NCBIfam" id="NF045941">
    <property type="entry name" value="PropMonoxMimD"/>
    <property type="match status" value="1"/>
</dbReference>
<dbReference type="Pfam" id="PF02406">
    <property type="entry name" value="MmoB_DmpM"/>
    <property type="match status" value="1"/>
</dbReference>
<dbReference type="SUPFAM" id="SSF56029">
    <property type="entry name" value="Monooxygenase (hydroxylase) regulatory protein"/>
    <property type="match status" value="1"/>
</dbReference>
<keyword id="KW-1185">Reference proteome</keyword>
<accession>A0QTV0</accession>
<accession>I7G5F2</accession>
<feature type="chain" id="PRO_0000442975" description="Propane 2-monooxygenase, effector component">
    <location>
        <begin position="1"/>
        <end position="114"/>
    </location>
</feature>
<reference key="1">
    <citation type="submission" date="2006-10" db="EMBL/GenBank/DDBJ databases">
        <authorList>
            <person name="Fleischmann R.D."/>
            <person name="Dodson R.J."/>
            <person name="Haft D.H."/>
            <person name="Merkel J.S."/>
            <person name="Nelson W.C."/>
            <person name="Fraser C.M."/>
        </authorList>
    </citation>
    <scope>NUCLEOTIDE SEQUENCE [LARGE SCALE GENOMIC DNA]</scope>
    <source>
        <strain evidence="8">ATCC 700084 / mc(2)155</strain>
    </source>
</reference>
<reference key="2">
    <citation type="journal article" date="2007" name="Genome Biol.">
        <title>Interrupted coding sequences in Mycobacterium smegmatis: authentic mutations or sequencing errors?</title>
        <authorList>
            <person name="Deshayes C."/>
            <person name="Perrodou E."/>
            <person name="Gallien S."/>
            <person name="Euphrasie D."/>
            <person name="Schaeffer C."/>
            <person name="Van-Dorsselaer A."/>
            <person name="Poch O."/>
            <person name="Lecompte O."/>
            <person name="Reyrat J.-M."/>
        </authorList>
    </citation>
    <scope>NUCLEOTIDE SEQUENCE [LARGE SCALE GENOMIC DNA]</scope>
    <source>
        <strain evidence="9">ATCC 700084 / mc(2)155</strain>
    </source>
</reference>
<reference key="3">
    <citation type="journal article" date="2009" name="Genome Res.">
        <title>Ortho-proteogenomics: multiple proteomes investigation through orthology and a new MS-based protocol.</title>
        <authorList>
            <person name="Gallien S."/>
            <person name="Perrodou E."/>
            <person name="Carapito C."/>
            <person name="Deshayes C."/>
            <person name="Reyrat J.-M."/>
            <person name="Van Dorsselaer A."/>
            <person name="Poch O."/>
            <person name="Schaeffer C."/>
            <person name="Lecompte O."/>
        </authorList>
    </citation>
    <scope>NUCLEOTIDE SEQUENCE [LARGE SCALE GENOMIC DNA]</scope>
    <source>
        <strain evidence="9">ATCC 700084 / mc(2)155</strain>
    </source>
</reference>
<reference key="4">
    <citation type="journal article" date="2011" name="Appl. Environ. Microbiol.">
        <title>Identification of the monooxygenase gene clusters responsible for the regioselective oxidation of phenol to hydroquinone in mycobacteria.</title>
        <authorList>
            <person name="Furuya T."/>
            <person name="Hirose S."/>
            <person name="Osanai H."/>
            <person name="Semba H."/>
            <person name="Kino K."/>
        </authorList>
    </citation>
    <scope>FUNCTION</scope>
    <scope>INDUCTION BY ACETONE</scope>
    <scope>SUBUNIT</scope>
    <source>
        <strain>ATCC 700084 / mc(2)155</strain>
    </source>
</reference>
<reference key="5">
    <citation type="journal article" date="2011" name="J. Bacteriol.">
        <title>Identification of the regulator gene responsible for the acetone-responsive expression of the binuclear iron monooxygenase gene cluster in mycobacteria.</title>
        <authorList>
            <person name="Furuya T."/>
            <person name="Hirose S."/>
            <person name="Semba H."/>
            <person name="Kino K."/>
        </authorList>
    </citation>
    <scope>INDUCTION BY MIMR</scope>
    <source>
        <strain>ATCC 700084 / mc(2)155</strain>
    </source>
</reference>
<evidence type="ECO:0000269" key="1">
    <source>
    </source>
</evidence>
<evidence type="ECO:0000269" key="2">
    <source>
    </source>
</evidence>
<evidence type="ECO:0000303" key="3">
    <source>
    </source>
</evidence>
<evidence type="ECO:0000305" key="4"/>
<evidence type="ECO:0000305" key="5">
    <source>
    </source>
</evidence>
<evidence type="ECO:0000312" key="6">
    <source>
        <dbReference type="EMBL" id="ABK73591.1"/>
    </source>
</evidence>
<evidence type="ECO:0000312" key="7">
    <source>
        <dbReference type="EMBL" id="AFP38401.1"/>
    </source>
</evidence>
<evidence type="ECO:0000312" key="8">
    <source>
        <dbReference type="Proteomes" id="UP000000757"/>
    </source>
</evidence>
<evidence type="ECO:0000312" key="9">
    <source>
        <dbReference type="Proteomes" id="UP000006158"/>
    </source>
</evidence>
<name>MIMD_MYCS2</name>
<comment type="function">
    <text evidence="1">Effector component of the propane 2-monooxygenase multicomponent enzyme system which is involved in the degradation of propane via the O2-dependent hydroxylation of propane.</text>
</comment>
<comment type="subunit">
    <text evidence="5">The propane 2-monooxygenase multicomponent enzyme system is composed of an electron transfer component and a monooxygenase component interacting with the effector protein MimD. The electron transfer component is composed of a reductase (MimB), and the monooxygenase component is formed by a large subunit (MimA) and a small subunit (MimC).</text>
</comment>
<comment type="induction">
    <text evidence="1 2">By acetone (PubMed:21183637). Transcriptionally activated by MimR (PubMed:21856847).</text>
</comment>
<comment type="similarity">
    <text evidence="4">Belongs to the TmoD/XamoD family.</text>
</comment>
<comment type="sequence caution" evidence="4">
    <conflict type="erroneous initiation">
        <sequence resource="EMBL-CDS" id="AFP38401"/>
    </conflict>
    <text>Truncated N-terminus.</text>
</comment>
<organism>
    <name type="scientific">Mycolicibacterium smegmatis (strain ATCC 700084 / mc(2)155)</name>
    <name type="common">Mycobacterium smegmatis</name>
    <dbReference type="NCBI Taxonomy" id="246196"/>
    <lineage>
        <taxon>Bacteria</taxon>
        <taxon>Bacillati</taxon>
        <taxon>Actinomycetota</taxon>
        <taxon>Actinomycetes</taxon>
        <taxon>Mycobacteriales</taxon>
        <taxon>Mycobacteriaceae</taxon>
        <taxon>Mycolicibacterium</taxon>
    </lineage>
</organism>
<sequence>MSSMQFGAATEFSNKCGVTLMNTPIGRVVAEVMGAKEGVELTEYPSMIRVDGVKLLSFDYDELTEALGEEFDGSIFEEISSTHYGRMVHLDDKTMLFASPEDAAEYIGFDLTAK</sequence>